<proteinExistence type="inferred from homology"/>
<name>CLPX_RHOP2</name>
<gene>
    <name evidence="1" type="primary">clpX</name>
    <name type="ordered locus">RPB_2564</name>
</gene>
<organism>
    <name type="scientific">Rhodopseudomonas palustris (strain HaA2)</name>
    <dbReference type="NCBI Taxonomy" id="316058"/>
    <lineage>
        <taxon>Bacteria</taxon>
        <taxon>Pseudomonadati</taxon>
        <taxon>Pseudomonadota</taxon>
        <taxon>Alphaproteobacteria</taxon>
        <taxon>Hyphomicrobiales</taxon>
        <taxon>Nitrobacteraceae</taxon>
        <taxon>Rhodopseudomonas</taxon>
    </lineage>
</organism>
<sequence>MSKVGTSDSKNTLYCSFCGKSQHEVRKLIAGPTVFICDECVELCMDIIREENKSSLVKSRDGIPTPKEICKVLDDYVIGQNHAKKVLSVAVHNHYKRLNHQTKHNDVELAKSNILLIGPTGSGKTLLAQTLARILDVPFTMADATTLTEAGYVGEDVENIILKLLQAADYNVERAQRGIVYIDEIDKISRKSDNPSITRDVSGEGVQQALLKIMEGTVASVPPQGGRKHPQQEFLQVDTTNILFICGGAFAGLEKIISARGRSTSIGFAAQVLAPEDRRTGEIFRHVEPEDLLKYGLIPEFVGRLPVVATLEDLDEASLKKILTDPKNALVKQYQRLFEMENIELTFADEALGAVARKAIERKTGARGLRSILESILLETMFDLPGLEGVEEVVISREVVDGTARPLYIYADRSDRAAESSASA</sequence>
<comment type="function">
    <text evidence="1">ATP-dependent specificity component of the Clp protease. It directs the protease to specific substrates. Can perform chaperone functions in the absence of ClpP.</text>
</comment>
<comment type="subunit">
    <text evidence="1">Component of the ClpX-ClpP complex. Forms a hexameric ring that, in the presence of ATP, binds to fourteen ClpP subunits assembled into a disk-like structure with a central cavity, resembling the structure of eukaryotic proteasomes.</text>
</comment>
<comment type="similarity">
    <text evidence="1">Belongs to the ClpX chaperone family.</text>
</comment>
<feature type="chain" id="PRO_1000024633" description="ATP-dependent Clp protease ATP-binding subunit ClpX">
    <location>
        <begin position="1"/>
        <end position="424"/>
    </location>
</feature>
<feature type="domain" description="ClpX-type ZB" evidence="2">
    <location>
        <begin position="3"/>
        <end position="56"/>
    </location>
</feature>
<feature type="binding site" evidence="2">
    <location>
        <position position="15"/>
    </location>
    <ligand>
        <name>Zn(2+)</name>
        <dbReference type="ChEBI" id="CHEBI:29105"/>
    </ligand>
</feature>
<feature type="binding site" evidence="2">
    <location>
        <position position="18"/>
    </location>
    <ligand>
        <name>Zn(2+)</name>
        <dbReference type="ChEBI" id="CHEBI:29105"/>
    </ligand>
</feature>
<feature type="binding site" evidence="2">
    <location>
        <position position="37"/>
    </location>
    <ligand>
        <name>Zn(2+)</name>
        <dbReference type="ChEBI" id="CHEBI:29105"/>
    </ligand>
</feature>
<feature type="binding site" evidence="2">
    <location>
        <position position="40"/>
    </location>
    <ligand>
        <name>Zn(2+)</name>
        <dbReference type="ChEBI" id="CHEBI:29105"/>
    </ligand>
</feature>
<feature type="binding site" evidence="1">
    <location>
        <begin position="119"/>
        <end position="126"/>
    </location>
    <ligand>
        <name>ATP</name>
        <dbReference type="ChEBI" id="CHEBI:30616"/>
    </ligand>
</feature>
<dbReference type="EMBL" id="CP000250">
    <property type="protein sequence ID" value="ABD07267.1"/>
    <property type="molecule type" value="Genomic_DNA"/>
</dbReference>
<dbReference type="RefSeq" id="WP_011441452.1">
    <property type="nucleotide sequence ID" value="NC_007778.1"/>
</dbReference>
<dbReference type="SMR" id="Q2IWZ3"/>
<dbReference type="STRING" id="316058.RPB_2564"/>
<dbReference type="KEGG" id="rpb:RPB_2564"/>
<dbReference type="eggNOG" id="COG1219">
    <property type="taxonomic scope" value="Bacteria"/>
</dbReference>
<dbReference type="HOGENOM" id="CLU_014218_8_2_5"/>
<dbReference type="OrthoDB" id="9804062at2"/>
<dbReference type="Proteomes" id="UP000008809">
    <property type="component" value="Chromosome"/>
</dbReference>
<dbReference type="GO" id="GO:0009376">
    <property type="term" value="C:HslUV protease complex"/>
    <property type="evidence" value="ECO:0007669"/>
    <property type="project" value="TreeGrafter"/>
</dbReference>
<dbReference type="GO" id="GO:0005524">
    <property type="term" value="F:ATP binding"/>
    <property type="evidence" value="ECO:0007669"/>
    <property type="project" value="UniProtKB-UniRule"/>
</dbReference>
<dbReference type="GO" id="GO:0016887">
    <property type="term" value="F:ATP hydrolysis activity"/>
    <property type="evidence" value="ECO:0007669"/>
    <property type="project" value="InterPro"/>
</dbReference>
<dbReference type="GO" id="GO:0140662">
    <property type="term" value="F:ATP-dependent protein folding chaperone"/>
    <property type="evidence" value="ECO:0007669"/>
    <property type="project" value="InterPro"/>
</dbReference>
<dbReference type="GO" id="GO:0046983">
    <property type="term" value="F:protein dimerization activity"/>
    <property type="evidence" value="ECO:0007669"/>
    <property type="project" value="InterPro"/>
</dbReference>
<dbReference type="GO" id="GO:0051082">
    <property type="term" value="F:unfolded protein binding"/>
    <property type="evidence" value="ECO:0007669"/>
    <property type="project" value="UniProtKB-UniRule"/>
</dbReference>
<dbReference type="GO" id="GO:0008270">
    <property type="term" value="F:zinc ion binding"/>
    <property type="evidence" value="ECO:0007669"/>
    <property type="project" value="InterPro"/>
</dbReference>
<dbReference type="GO" id="GO:0051301">
    <property type="term" value="P:cell division"/>
    <property type="evidence" value="ECO:0007669"/>
    <property type="project" value="TreeGrafter"/>
</dbReference>
<dbReference type="GO" id="GO:0051603">
    <property type="term" value="P:proteolysis involved in protein catabolic process"/>
    <property type="evidence" value="ECO:0007669"/>
    <property type="project" value="TreeGrafter"/>
</dbReference>
<dbReference type="CDD" id="cd19497">
    <property type="entry name" value="RecA-like_ClpX"/>
    <property type="match status" value="1"/>
</dbReference>
<dbReference type="FunFam" id="1.10.8.60:FF:000002">
    <property type="entry name" value="ATP-dependent Clp protease ATP-binding subunit ClpX"/>
    <property type="match status" value="1"/>
</dbReference>
<dbReference type="FunFam" id="3.40.50.300:FF:000005">
    <property type="entry name" value="ATP-dependent Clp protease ATP-binding subunit ClpX"/>
    <property type="match status" value="1"/>
</dbReference>
<dbReference type="Gene3D" id="1.10.8.60">
    <property type="match status" value="1"/>
</dbReference>
<dbReference type="Gene3D" id="6.20.220.10">
    <property type="entry name" value="ClpX chaperone, C4-type zinc finger domain"/>
    <property type="match status" value="1"/>
</dbReference>
<dbReference type="Gene3D" id="3.40.50.300">
    <property type="entry name" value="P-loop containing nucleotide triphosphate hydrolases"/>
    <property type="match status" value="1"/>
</dbReference>
<dbReference type="HAMAP" id="MF_00175">
    <property type="entry name" value="ClpX"/>
    <property type="match status" value="1"/>
</dbReference>
<dbReference type="InterPro" id="IPR003593">
    <property type="entry name" value="AAA+_ATPase"/>
</dbReference>
<dbReference type="InterPro" id="IPR050052">
    <property type="entry name" value="ATP-dep_Clp_protease_ClpX"/>
</dbReference>
<dbReference type="InterPro" id="IPR003959">
    <property type="entry name" value="ATPase_AAA_core"/>
</dbReference>
<dbReference type="InterPro" id="IPR019489">
    <property type="entry name" value="Clp_ATPase_C"/>
</dbReference>
<dbReference type="InterPro" id="IPR004487">
    <property type="entry name" value="Clp_protease_ATP-bd_su_ClpX"/>
</dbReference>
<dbReference type="InterPro" id="IPR046425">
    <property type="entry name" value="ClpX_bact"/>
</dbReference>
<dbReference type="InterPro" id="IPR027417">
    <property type="entry name" value="P-loop_NTPase"/>
</dbReference>
<dbReference type="InterPro" id="IPR010603">
    <property type="entry name" value="Znf_CppX_C4"/>
</dbReference>
<dbReference type="InterPro" id="IPR038366">
    <property type="entry name" value="Znf_CppX_C4_sf"/>
</dbReference>
<dbReference type="NCBIfam" id="TIGR00382">
    <property type="entry name" value="clpX"/>
    <property type="match status" value="1"/>
</dbReference>
<dbReference type="NCBIfam" id="NF003745">
    <property type="entry name" value="PRK05342.1"/>
    <property type="match status" value="1"/>
</dbReference>
<dbReference type="PANTHER" id="PTHR48102:SF7">
    <property type="entry name" value="ATP-DEPENDENT CLP PROTEASE ATP-BINDING SUBUNIT CLPX-LIKE, MITOCHONDRIAL"/>
    <property type="match status" value="1"/>
</dbReference>
<dbReference type="PANTHER" id="PTHR48102">
    <property type="entry name" value="ATP-DEPENDENT CLP PROTEASE ATP-BINDING SUBUNIT CLPX-LIKE, MITOCHONDRIAL-RELATED"/>
    <property type="match status" value="1"/>
</dbReference>
<dbReference type="Pfam" id="PF07724">
    <property type="entry name" value="AAA_2"/>
    <property type="match status" value="1"/>
</dbReference>
<dbReference type="Pfam" id="PF10431">
    <property type="entry name" value="ClpB_D2-small"/>
    <property type="match status" value="1"/>
</dbReference>
<dbReference type="Pfam" id="PF06689">
    <property type="entry name" value="zf-C4_ClpX"/>
    <property type="match status" value="1"/>
</dbReference>
<dbReference type="SMART" id="SM00382">
    <property type="entry name" value="AAA"/>
    <property type="match status" value="1"/>
</dbReference>
<dbReference type="SMART" id="SM01086">
    <property type="entry name" value="ClpB_D2-small"/>
    <property type="match status" value="1"/>
</dbReference>
<dbReference type="SMART" id="SM00994">
    <property type="entry name" value="zf-C4_ClpX"/>
    <property type="match status" value="1"/>
</dbReference>
<dbReference type="SUPFAM" id="SSF57716">
    <property type="entry name" value="Glucocorticoid receptor-like (DNA-binding domain)"/>
    <property type="match status" value="1"/>
</dbReference>
<dbReference type="SUPFAM" id="SSF52540">
    <property type="entry name" value="P-loop containing nucleoside triphosphate hydrolases"/>
    <property type="match status" value="1"/>
</dbReference>
<dbReference type="PROSITE" id="PS51902">
    <property type="entry name" value="CLPX_ZB"/>
    <property type="match status" value="1"/>
</dbReference>
<reference key="1">
    <citation type="submission" date="2006-01" db="EMBL/GenBank/DDBJ databases">
        <title>Complete sequence of Rhodopseudomonas palustris HaA2.</title>
        <authorList>
            <consortium name="US DOE Joint Genome Institute"/>
            <person name="Copeland A."/>
            <person name="Lucas S."/>
            <person name="Lapidus A."/>
            <person name="Barry K."/>
            <person name="Detter J.C."/>
            <person name="Glavina T."/>
            <person name="Hammon N."/>
            <person name="Israni S."/>
            <person name="Pitluck S."/>
            <person name="Chain P."/>
            <person name="Malfatti S."/>
            <person name="Shin M."/>
            <person name="Vergez L."/>
            <person name="Schmutz J."/>
            <person name="Larimer F."/>
            <person name="Land M."/>
            <person name="Hauser L."/>
            <person name="Pelletier D.A."/>
            <person name="Kyrpides N."/>
            <person name="Anderson I."/>
            <person name="Oda Y."/>
            <person name="Harwood C.S."/>
            <person name="Richardson P."/>
        </authorList>
    </citation>
    <scope>NUCLEOTIDE SEQUENCE [LARGE SCALE GENOMIC DNA]</scope>
    <source>
        <strain>HaA2</strain>
    </source>
</reference>
<protein>
    <recommendedName>
        <fullName evidence="1">ATP-dependent Clp protease ATP-binding subunit ClpX</fullName>
    </recommendedName>
</protein>
<evidence type="ECO:0000255" key="1">
    <source>
        <dbReference type="HAMAP-Rule" id="MF_00175"/>
    </source>
</evidence>
<evidence type="ECO:0000255" key="2">
    <source>
        <dbReference type="PROSITE-ProRule" id="PRU01250"/>
    </source>
</evidence>
<accession>Q2IWZ3</accession>
<keyword id="KW-0067">ATP-binding</keyword>
<keyword id="KW-0143">Chaperone</keyword>
<keyword id="KW-0479">Metal-binding</keyword>
<keyword id="KW-0547">Nucleotide-binding</keyword>
<keyword id="KW-1185">Reference proteome</keyword>
<keyword id="KW-0862">Zinc</keyword>